<comment type="function">
    <text evidence="3">Catalyzes the synthesis of carbamoyl phosphate from ATP, ammonium and bicarbonate. Proceeds via a three-step mechanism, i.e. the phosphorylation of hydrogencarbonate to carboxyphosphate, a nucleophilic attack of ammonia on carboxyphosphate yielding carbamate, and the phosphorylation of carbamate forming carbamoyl phosphate. In M.smithii, the predominant archaeon in the human gut, one function of this enzyme may be to sequester ammonia, a scarce nutrient in the intestine which is the major source of nitrogen in M.smithii for the biosynthesis of nucleotides, amino acids, and many other metabolites.</text>
</comment>
<comment type="catalytic activity">
    <reaction evidence="1 3">
        <text>hydrogencarbonate + NH4(+) + 2 ATP = carbamoyl phosphate + 2 ADP + phosphate + 2 H(+)</text>
        <dbReference type="Rhea" id="RHEA:18029"/>
        <dbReference type="ChEBI" id="CHEBI:15378"/>
        <dbReference type="ChEBI" id="CHEBI:17544"/>
        <dbReference type="ChEBI" id="CHEBI:28938"/>
        <dbReference type="ChEBI" id="CHEBI:30616"/>
        <dbReference type="ChEBI" id="CHEBI:43474"/>
        <dbReference type="ChEBI" id="CHEBI:58228"/>
        <dbReference type="ChEBI" id="CHEBI:456216"/>
        <dbReference type="EC" id="6.3.4.16"/>
    </reaction>
    <physiologicalReaction direction="left-to-right" evidence="1 6">
        <dbReference type="Rhea" id="RHEA:18030"/>
    </physiologicalReaction>
</comment>
<comment type="cofactor">
    <cofactor evidence="2">
        <name>Mg(2+)</name>
        <dbReference type="ChEBI" id="CHEBI:18420"/>
    </cofactor>
    <cofactor evidence="2">
        <name>Mn(2+)</name>
        <dbReference type="ChEBI" id="CHEBI:29035"/>
    </cofactor>
    <text evidence="2">Binds 2 magnesium or manganese ions per subunit.</text>
</comment>
<comment type="biophysicochemical properties">
    <kinetics>
        <KM evidence="3">0.61 mM for ATP (at 38 degrees Celsius and pH 8.0)</KM>
        <KM evidence="3">15.6 mM for NH4(+) (at 38 degrees Celsius and pH 8.0)</KM>
        <KM evidence="3">14.5 mM for hydrogencarbonate (at 38 degrees Celsius and pH 8.0)</KM>
        <Vmax evidence="3">62.0 nmol/min/mg enzyme towards ATP (at 38 degrees Celsius and pH 8.0)</Vmax>
        <Vmax evidence="3">75.0 nmol/min/mg enzyme towards NH4(+) (at 38 degrees Celsius and pH 8.0)</Vmax>
        <Vmax evidence="3">64.0 nmol/min/mg enzyme towards hydrogencarbonate (at 38 degrees Celsius and pH 8.0)</Vmax>
        <text evidence="3">kcat is 0.043 sec(-1) towards ATP (at 38 degrees Celsius and pH 8.0). kcat is 0.052 sec(-1) towards NH4(+) (at 38 degrees Celsius and pH 8.0). kcat is 0.044 sec(-1) towards hydrogencarbonate (at 38 degrees Celsius and pH 8.0).</text>
    </kinetics>
</comment>
<comment type="subunit">
    <text evidence="3">Forms homodimers and homotetramers (dimers of dimers).</text>
</comment>
<comment type="domain">
    <text evidence="3">Lacks the domain involved in allosteric regulation present in CarB CPSases.</text>
</comment>
<comment type="miscellaneous">
    <text evidence="4">Several lines of evidence suggest that obesity is associated with elevated levels of intestinal methanogenic archaea. Consequently, this enzyme may be an attractive drug target in the treatment of human obesity.</text>
</comment>
<comment type="similarity">
    <text evidence="1 5">Belongs to the small carbamoyl-phosphate synthase family.</text>
</comment>
<reference key="1">
    <citation type="journal article" date="2007" name="Proc. Natl. Acad. Sci. U.S.A.">
        <title>Genomic and metabolic adaptations of Methanobrevibacter smithii to the human gut.</title>
        <authorList>
            <person name="Samuel B.S."/>
            <person name="Hansen E.E."/>
            <person name="Manchester J.K."/>
            <person name="Coutinho P.M."/>
            <person name="Henrissat B."/>
            <person name="Fulton R."/>
            <person name="Latreille P."/>
            <person name="Kim K."/>
            <person name="Wilson R.K."/>
            <person name="Gordon J.I."/>
        </authorList>
    </citation>
    <scope>NUCLEOTIDE SEQUENCE [LARGE SCALE GENOMIC DNA]</scope>
    <source>
        <strain>ATCC 35061 / DSM 861 / OCM 144 / PS</strain>
    </source>
</reference>
<reference key="2">
    <citation type="journal article" date="2012" name="J. Mol. Microbiol. Biotechnol.">
        <title>The smallest active carbamoyl phosphate synthetase was identified in the human gut archaeon Methanobrevibacter smithii.</title>
        <authorList>
            <person name="Popa E."/>
            <person name="Perera N."/>
            <person name="Kibedi-Szabo C.Z."/>
            <person name="Guy-Evans H."/>
            <person name="Evans D.R."/>
            <person name="Purcarea C."/>
        </authorList>
    </citation>
    <scope>FUNCTION</scope>
    <scope>CATALYTIC ACTIVITY</scope>
    <scope>BIOPHYSICOCHEMICAL PROPERTIES</scope>
    <scope>SUBUNIT</scope>
    <scope>3D-STRUCTURE MODELING</scope>
    <scope>REACTION MECHANISM</scope>
    <scope>DOMAIN</scope>
    <source>
        <strain>ATCC 35061 / DSM 861 / OCM 144 / PS</strain>
    </source>
</reference>
<evidence type="ECO:0000255" key="1">
    <source>
        <dbReference type="HAMAP-Rule" id="MF_02221"/>
    </source>
</evidence>
<evidence type="ECO:0000255" key="2">
    <source>
        <dbReference type="PROSITE-ProRule" id="PRU00409"/>
    </source>
</evidence>
<evidence type="ECO:0000269" key="3">
    <source>
    </source>
</evidence>
<evidence type="ECO:0000303" key="4">
    <source>
    </source>
</evidence>
<evidence type="ECO:0000305" key="5"/>
<evidence type="ECO:0000305" key="6">
    <source>
    </source>
</evidence>
<evidence type="ECO:0000312" key="7">
    <source>
        <dbReference type="EMBL" id="ABQ86566.1"/>
    </source>
</evidence>
<sequence length="367" mass="41403">MKILFIGSRLYDDIDYYVRENGIESIITESNEDAINLDLPDQVFIVPRGMDSPKQIAISQNVDAVVPLIGIDPPLIEVAKMKEELEAETDIPVIAANVRAVRLTSDKIKTKEFYNEIGVPTPQYQILAKDDFESKLKMEFPVVLKQGQGQGGKDIKVAESLDDVKEYFEEFDHALCEKFIEGSEISIEVLGYNGEYVPLSPIYKGETTLEGIHPLNKIKTAPCLVEGLDNNLVQRTAYKVAKNLGSDGIFEMDFMFSKDEQQLYAIEVNTRPNGTRYLTTATCGVNSLCELVNMAAGKFSIKDIQDKLEYYYATEIPIGRYKGPDLNEPLKSFKNNDWVVHGPEGYQRITIRADSKEQLDRYVEDLI</sequence>
<keyword id="KW-0067">ATP-binding</keyword>
<keyword id="KW-0436">Ligase</keyword>
<keyword id="KW-0460">Magnesium</keyword>
<keyword id="KW-0464">Manganese</keyword>
<keyword id="KW-0479">Metal-binding</keyword>
<keyword id="KW-0547">Nucleotide-binding</keyword>
<feature type="chain" id="PRO_0000448004" description="Carbamoyl-phosphate synthase">
    <location>
        <begin position="1"/>
        <end position="367"/>
    </location>
</feature>
<feature type="domain" description="ATP-grasp" evidence="2">
    <location>
        <begin position="111"/>
        <end position="296"/>
    </location>
</feature>
<feature type="binding site" evidence="2">
    <location>
        <begin position="137"/>
        <end position="186"/>
    </location>
    <ligand>
        <name>ATP</name>
        <dbReference type="ChEBI" id="CHEBI:30616"/>
    </ligand>
</feature>
<feature type="binding site" evidence="2">
    <location>
        <position position="253"/>
    </location>
    <ligand>
        <name>Mg(2+)</name>
        <dbReference type="ChEBI" id="CHEBI:18420"/>
        <label>1</label>
    </ligand>
</feature>
<feature type="binding site" evidence="2">
    <location>
        <position position="253"/>
    </location>
    <ligand>
        <name>Mn(2+)</name>
        <dbReference type="ChEBI" id="CHEBI:29035"/>
        <label>1</label>
    </ligand>
</feature>
<feature type="binding site" evidence="2">
    <location>
        <position position="267"/>
    </location>
    <ligand>
        <name>Mg(2+)</name>
        <dbReference type="ChEBI" id="CHEBI:18420"/>
        <label>1</label>
    </ligand>
</feature>
<feature type="binding site" evidence="2">
    <location>
        <position position="267"/>
    </location>
    <ligand>
        <name>Mg(2+)</name>
        <dbReference type="ChEBI" id="CHEBI:18420"/>
        <label>2</label>
    </ligand>
</feature>
<feature type="binding site" evidence="2">
    <location>
        <position position="267"/>
    </location>
    <ligand>
        <name>Mn(2+)</name>
        <dbReference type="ChEBI" id="CHEBI:29035"/>
        <label>1</label>
    </ligand>
</feature>
<feature type="binding site" evidence="2">
    <location>
        <position position="267"/>
    </location>
    <ligand>
        <name>Mn(2+)</name>
        <dbReference type="ChEBI" id="CHEBI:29035"/>
        <label>2</label>
    </ligand>
</feature>
<feature type="binding site" evidence="2">
    <location>
        <position position="269"/>
    </location>
    <ligand>
        <name>Mg(2+)</name>
        <dbReference type="ChEBI" id="CHEBI:18420"/>
        <label>2</label>
    </ligand>
</feature>
<feature type="binding site" evidence="2">
    <location>
        <position position="269"/>
    </location>
    <ligand>
        <name>Mn(2+)</name>
        <dbReference type="ChEBI" id="CHEBI:29035"/>
        <label>2</label>
    </ligand>
</feature>
<proteinExistence type="evidence at protein level"/>
<accession>A5UK38</accession>
<gene>
    <name evidence="7" type="ordered locus">Msm_0361</name>
</gene>
<dbReference type="EC" id="6.3.4.16" evidence="1 3"/>
<dbReference type="EMBL" id="CP000678">
    <property type="protein sequence ID" value="ABQ86566.1"/>
    <property type="molecule type" value="Genomic_DNA"/>
</dbReference>
<dbReference type="RefSeq" id="WP_011953845.1">
    <property type="nucleotide sequence ID" value="NC_009515.1"/>
</dbReference>
<dbReference type="SMR" id="A5UK38"/>
<dbReference type="STRING" id="420247.Msm_0361"/>
<dbReference type="EnsemblBacteria" id="ABQ86566">
    <property type="protein sequence ID" value="ABQ86566"/>
    <property type="gene ID" value="Msm_0361"/>
</dbReference>
<dbReference type="GeneID" id="78816987"/>
<dbReference type="KEGG" id="msi:Msm_0361"/>
<dbReference type="PATRIC" id="fig|420247.28.peg.362"/>
<dbReference type="eggNOG" id="arCOG01596">
    <property type="taxonomic scope" value="Archaea"/>
</dbReference>
<dbReference type="HOGENOM" id="CLU_734905_0_0_2"/>
<dbReference type="BioCyc" id="MSMI420247:GHWZ-366-MONOMER"/>
<dbReference type="BRENDA" id="6.3.4.16">
    <property type="organism ID" value="11234"/>
</dbReference>
<dbReference type="Proteomes" id="UP000001992">
    <property type="component" value="Chromosome"/>
</dbReference>
<dbReference type="GO" id="GO:0005829">
    <property type="term" value="C:cytosol"/>
    <property type="evidence" value="ECO:0007669"/>
    <property type="project" value="TreeGrafter"/>
</dbReference>
<dbReference type="GO" id="GO:0005524">
    <property type="term" value="F:ATP binding"/>
    <property type="evidence" value="ECO:0007669"/>
    <property type="project" value="UniProtKB-UniRule"/>
</dbReference>
<dbReference type="GO" id="GO:0004087">
    <property type="term" value="F:carbamoyl-phosphate synthase (ammonia) activity"/>
    <property type="evidence" value="ECO:0007669"/>
    <property type="project" value="UniProtKB-UniRule"/>
</dbReference>
<dbReference type="GO" id="GO:0000287">
    <property type="term" value="F:magnesium ion binding"/>
    <property type="evidence" value="ECO:0007669"/>
    <property type="project" value="UniProtKB-UniRule"/>
</dbReference>
<dbReference type="GO" id="GO:0030145">
    <property type="term" value="F:manganese ion binding"/>
    <property type="evidence" value="ECO:0007669"/>
    <property type="project" value="UniProtKB-UniRule"/>
</dbReference>
<dbReference type="Gene3D" id="3.40.50.20">
    <property type="match status" value="1"/>
</dbReference>
<dbReference type="Gene3D" id="3.30.1490.20">
    <property type="entry name" value="ATP-grasp fold, A domain"/>
    <property type="match status" value="1"/>
</dbReference>
<dbReference type="Gene3D" id="3.30.470.20">
    <property type="entry name" value="ATP-grasp fold, B domain"/>
    <property type="match status" value="1"/>
</dbReference>
<dbReference type="HAMAP" id="MF_02221">
    <property type="entry name" value="CPSase"/>
    <property type="match status" value="1"/>
</dbReference>
<dbReference type="InterPro" id="IPR011761">
    <property type="entry name" value="ATP-grasp"/>
</dbReference>
<dbReference type="InterPro" id="IPR003806">
    <property type="entry name" value="ATP-grasp_PylC-type"/>
</dbReference>
<dbReference type="InterPro" id="IPR013815">
    <property type="entry name" value="ATP_grasp_subdomain_1"/>
</dbReference>
<dbReference type="InterPro" id="IPR043673">
    <property type="entry name" value="CPSase_Archaea"/>
</dbReference>
<dbReference type="PANTHER" id="PTHR43055">
    <property type="entry name" value="FORMATE-DEPENDENT PHOSPHORIBOSYLGLYCINAMIDE FORMYLTRANSFERASE"/>
    <property type="match status" value="1"/>
</dbReference>
<dbReference type="PANTHER" id="PTHR43055:SF1">
    <property type="entry name" value="FORMATE-DEPENDENT PHOSPHORIBOSYLGLYCINAMIDE FORMYLTRANSFERASE"/>
    <property type="match status" value="1"/>
</dbReference>
<dbReference type="Pfam" id="PF02655">
    <property type="entry name" value="ATP-grasp_3"/>
    <property type="match status" value="1"/>
</dbReference>
<dbReference type="SMART" id="SM01209">
    <property type="entry name" value="GARS_A"/>
    <property type="match status" value="1"/>
</dbReference>
<dbReference type="SUPFAM" id="SSF56059">
    <property type="entry name" value="Glutathione synthetase ATP-binding domain-like"/>
    <property type="match status" value="1"/>
</dbReference>
<dbReference type="PROSITE" id="PS50975">
    <property type="entry name" value="ATP_GRASP"/>
    <property type="match status" value="1"/>
</dbReference>
<protein>
    <recommendedName>
        <fullName evidence="1 6">Carbamoyl-phosphate synthase</fullName>
        <ecNumber evidence="1 3">6.3.4.16</ecNumber>
    </recommendedName>
    <alternativeName>
        <fullName evidence="1 4">Carbamoyl phosphate synthetase</fullName>
        <shortName evidence="1 4">CPSase</shortName>
    </alternativeName>
    <alternativeName>
        <fullName evidence="4">SYN3</fullName>
    </alternativeName>
</protein>
<organism>
    <name type="scientific">Methanobrevibacter smithii (strain ATCC 35061 / DSM 861 / OCM 144 / PS)</name>
    <dbReference type="NCBI Taxonomy" id="420247"/>
    <lineage>
        <taxon>Archaea</taxon>
        <taxon>Methanobacteriati</taxon>
        <taxon>Methanobacteriota</taxon>
        <taxon>Methanomada group</taxon>
        <taxon>Methanobacteria</taxon>
        <taxon>Methanobacteriales</taxon>
        <taxon>Methanobacteriaceae</taxon>
        <taxon>Methanobrevibacter</taxon>
    </lineage>
</organism>
<name>CPS_METS3</name>